<evidence type="ECO:0000255" key="1">
    <source>
        <dbReference type="HAMAP-Rule" id="MF_00502"/>
    </source>
</evidence>
<evidence type="ECO:0000305" key="2"/>
<feature type="chain" id="PRO_1000014718" description="Large ribosomal subunit protein bL31B">
    <location>
        <begin position="1"/>
        <end position="80"/>
    </location>
</feature>
<gene>
    <name evidence="1" type="primary">rpmE2</name>
    <name type="ordered locus">SPD_1154</name>
</gene>
<name>RL31B_STRP2</name>
<keyword id="KW-1185">Reference proteome</keyword>
<keyword id="KW-0687">Ribonucleoprotein</keyword>
<keyword id="KW-0689">Ribosomal protein</keyword>
<dbReference type="EMBL" id="CP000410">
    <property type="protein sequence ID" value="ABJ54060.1"/>
    <property type="molecule type" value="Genomic_DNA"/>
</dbReference>
<dbReference type="RefSeq" id="WP_000710764.1">
    <property type="nucleotide sequence ID" value="NZ_JAMLJR010000006.1"/>
</dbReference>
<dbReference type="SMR" id="Q04K26"/>
<dbReference type="PaxDb" id="373153-SPD_1154"/>
<dbReference type="KEGG" id="spd:SPD_1154"/>
<dbReference type="eggNOG" id="COG0254">
    <property type="taxonomic scope" value="Bacteria"/>
</dbReference>
<dbReference type="HOGENOM" id="CLU_114306_2_2_9"/>
<dbReference type="BioCyc" id="SPNE373153:G1G6V-1246-MONOMER"/>
<dbReference type="Proteomes" id="UP000001452">
    <property type="component" value="Chromosome"/>
</dbReference>
<dbReference type="GO" id="GO:1990904">
    <property type="term" value="C:ribonucleoprotein complex"/>
    <property type="evidence" value="ECO:0007669"/>
    <property type="project" value="UniProtKB-KW"/>
</dbReference>
<dbReference type="GO" id="GO:0005840">
    <property type="term" value="C:ribosome"/>
    <property type="evidence" value="ECO:0007669"/>
    <property type="project" value="UniProtKB-KW"/>
</dbReference>
<dbReference type="GO" id="GO:0003735">
    <property type="term" value="F:structural constituent of ribosome"/>
    <property type="evidence" value="ECO:0007669"/>
    <property type="project" value="InterPro"/>
</dbReference>
<dbReference type="GO" id="GO:0006412">
    <property type="term" value="P:translation"/>
    <property type="evidence" value="ECO:0007669"/>
    <property type="project" value="UniProtKB-UniRule"/>
</dbReference>
<dbReference type="Gene3D" id="4.10.830.30">
    <property type="entry name" value="Ribosomal protein L31"/>
    <property type="match status" value="1"/>
</dbReference>
<dbReference type="HAMAP" id="MF_00502">
    <property type="entry name" value="Ribosomal_bL31_2"/>
    <property type="match status" value="1"/>
</dbReference>
<dbReference type="InterPro" id="IPR034704">
    <property type="entry name" value="Ribosomal_bL28/bL31-like_sf"/>
</dbReference>
<dbReference type="InterPro" id="IPR002150">
    <property type="entry name" value="Ribosomal_bL31"/>
</dbReference>
<dbReference type="InterPro" id="IPR027493">
    <property type="entry name" value="Ribosomal_bL31_B"/>
</dbReference>
<dbReference type="InterPro" id="IPR042105">
    <property type="entry name" value="Ribosomal_bL31_sf"/>
</dbReference>
<dbReference type="NCBIfam" id="TIGR00105">
    <property type="entry name" value="L31"/>
    <property type="match status" value="1"/>
</dbReference>
<dbReference type="NCBIfam" id="NF002462">
    <property type="entry name" value="PRK01678.1"/>
    <property type="match status" value="1"/>
</dbReference>
<dbReference type="PANTHER" id="PTHR33280">
    <property type="entry name" value="50S RIBOSOMAL PROTEIN L31, CHLOROPLASTIC"/>
    <property type="match status" value="1"/>
</dbReference>
<dbReference type="PANTHER" id="PTHR33280:SF1">
    <property type="entry name" value="LARGE RIBOSOMAL SUBUNIT PROTEIN BL31C"/>
    <property type="match status" value="1"/>
</dbReference>
<dbReference type="Pfam" id="PF01197">
    <property type="entry name" value="Ribosomal_L31"/>
    <property type="match status" value="1"/>
</dbReference>
<dbReference type="PRINTS" id="PR01249">
    <property type="entry name" value="RIBOSOMALL31"/>
</dbReference>
<dbReference type="SUPFAM" id="SSF143800">
    <property type="entry name" value="L28p-like"/>
    <property type="match status" value="1"/>
</dbReference>
<dbReference type="PROSITE" id="PS01143">
    <property type="entry name" value="RIBOSOMAL_L31"/>
    <property type="match status" value="1"/>
</dbReference>
<protein>
    <recommendedName>
        <fullName evidence="1">Large ribosomal subunit protein bL31B</fullName>
    </recommendedName>
    <alternativeName>
        <fullName evidence="2">50S ribosomal protein L31 type B</fullName>
    </alternativeName>
</protein>
<organism>
    <name type="scientific">Streptococcus pneumoniae serotype 2 (strain D39 / NCTC 7466)</name>
    <dbReference type="NCBI Taxonomy" id="373153"/>
    <lineage>
        <taxon>Bacteria</taxon>
        <taxon>Bacillati</taxon>
        <taxon>Bacillota</taxon>
        <taxon>Bacilli</taxon>
        <taxon>Lactobacillales</taxon>
        <taxon>Streptococcaceae</taxon>
        <taxon>Streptococcus</taxon>
    </lineage>
</organism>
<comment type="subunit">
    <text evidence="1">Part of the 50S ribosomal subunit.</text>
</comment>
<comment type="similarity">
    <text evidence="1">Belongs to the bacterial ribosomal protein bL31 family. Type B subfamily.</text>
</comment>
<proteinExistence type="inferred from homology"/>
<accession>Q04K26</accession>
<sequence length="80" mass="9358">MKKDIHPEYRPVVFMDTTTGYQFLSGSTKRSNETVEFEGETYPLIRVEISSDSHPFYTGRQKFTQADGRVDRFNKKYGLK</sequence>
<reference key="1">
    <citation type="journal article" date="2007" name="J. Bacteriol.">
        <title>Genome sequence of Avery's virulent serotype 2 strain D39 of Streptococcus pneumoniae and comparison with that of unencapsulated laboratory strain R6.</title>
        <authorList>
            <person name="Lanie J.A."/>
            <person name="Ng W.-L."/>
            <person name="Kazmierczak K.M."/>
            <person name="Andrzejewski T.M."/>
            <person name="Davidsen T.M."/>
            <person name="Wayne K.J."/>
            <person name="Tettelin H."/>
            <person name="Glass J.I."/>
            <person name="Winkler M.E."/>
        </authorList>
    </citation>
    <scope>NUCLEOTIDE SEQUENCE [LARGE SCALE GENOMIC DNA]</scope>
    <source>
        <strain>D39 / NCTC 7466</strain>
    </source>
</reference>